<sequence length="167" mass="18927">METQRASLCLGRWSLWLLLLALVVPSASAQALSYREAVLRAVDRLNEQSSEANLYRLLELDQPPKADEDPGTPKPVSFTVKETVCPRPTWRPPELCDFKENGRVKQCVGTVTLDQIKDPLDITCNEIQSVGLLSRLRDFLSDRGRRLGEKIERIGQKIKDLSEFFQS</sequence>
<organism>
    <name type="scientific">Sus scrofa</name>
    <name type="common">Pig</name>
    <dbReference type="NCBI Taxonomy" id="9823"/>
    <lineage>
        <taxon>Eukaryota</taxon>
        <taxon>Metazoa</taxon>
        <taxon>Chordata</taxon>
        <taxon>Craniata</taxon>
        <taxon>Vertebrata</taxon>
        <taxon>Euteleostomi</taxon>
        <taxon>Mammalia</taxon>
        <taxon>Eutheria</taxon>
        <taxon>Laurasiatheria</taxon>
        <taxon>Artiodactyla</taxon>
        <taxon>Suina</taxon>
        <taxon>Suidae</taxon>
        <taxon>Sus</taxon>
    </lineage>
</organism>
<feature type="signal peptide" evidence="2">
    <location>
        <begin position="1"/>
        <end position="29"/>
    </location>
</feature>
<feature type="propeptide" id="PRO_0000004736" evidence="2">
    <location>
        <begin position="30"/>
        <end position="130"/>
    </location>
</feature>
<feature type="peptide" id="PRO_0000004737" description="Antibacterial peptide PMAP-37">
    <location>
        <begin position="131"/>
        <end position="167"/>
    </location>
</feature>
<feature type="disulfide bond" evidence="1">
    <location>
        <begin position="85"/>
        <end position="96"/>
    </location>
</feature>
<feature type="disulfide bond" evidence="1">
    <location>
        <begin position="107"/>
        <end position="124"/>
    </location>
</feature>
<keyword id="KW-0044">Antibiotic</keyword>
<keyword id="KW-0929">Antimicrobial</keyword>
<keyword id="KW-1015">Disulfide bond</keyword>
<keyword id="KW-1185">Reference proteome</keyword>
<keyword id="KW-0964">Secreted</keyword>
<keyword id="KW-0732">Signal</keyword>
<accession>P49932</accession>
<protein>
    <recommendedName>
        <fullName>Antibacterial peptide PMAP-37</fullName>
    </recommendedName>
    <alternativeName>
        <fullName>Myeloid antibacterial peptide 37</fullName>
    </alternativeName>
</protein>
<proteinExistence type="evidence at transcript level"/>
<comment type="function">
    <text>Exerts antimicrobial activity against both Gram-positive and negative bacteria with minimal inhibitory concentrations ranging over 1-4 micro molar. Its activity appears to be mediated by its ability to damage bacterial membranes.</text>
</comment>
<comment type="subcellular location">
    <subcellularLocation>
        <location>Secreted</location>
    </subcellularLocation>
</comment>
<comment type="similarity">
    <text evidence="3">Belongs to the cathelicidin family.</text>
</comment>
<evidence type="ECO:0000250" key="1"/>
<evidence type="ECO:0000255" key="2"/>
<evidence type="ECO:0000305" key="3"/>
<dbReference type="EMBL" id="L39641">
    <property type="protein sequence ID" value="AAA63447.1"/>
    <property type="molecule type" value="mRNA"/>
</dbReference>
<dbReference type="PIR" id="S68967">
    <property type="entry name" value="S68967"/>
</dbReference>
<dbReference type="SMR" id="P49932"/>
<dbReference type="FunCoup" id="P49932">
    <property type="interactions" value="103"/>
</dbReference>
<dbReference type="STRING" id="9823.ENSSSCP00000068398"/>
<dbReference type="PaxDb" id="9823-ENSSSCP00000012102"/>
<dbReference type="PeptideAtlas" id="P49932"/>
<dbReference type="Ensembl" id="ENSSSCT00105076289">
    <property type="protein sequence ID" value="ENSSSCP00105054028"/>
    <property type="gene ID" value="ENSSSCG00105040007"/>
</dbReference>
<dbReference type="eggNOG" id="ENOG502SAES">
    <property type="taxonomic scope" value="Eukaryota"/>
</dbReference>
<dbReference type="InParanoid" id="P49932"/>
<dbReference type="ChiTaRS" id="NPG4">
    <property type="organism name" value="pig"/>
</dbReference>
<dbReference type="Proteomes" id="UP000008227">
    <property type="component" value="Unplaced"/>
</dbReference>
<dbReference type="Proteomes" id="UP000314985">
    <property type="component" value="Unplaced"/>
</dbReference>
<dbReference type="Proteomes" id="UP000694570">
    <property type="component" value="Unplaced"/>
</dbReference>
<dbReference type="Proteomes" id="UP000694571">
    <property type="component" value="Unplaced"/>
</dbReference>
<dbReference type="Proteomes" id="UP000694720">
    <property type="component" value="Unplaced"/>
</dbReference>
<dbReference type="Proteomes" id="UP000694722">
    <property type="component" value="Unplaced"/>
</dbReference>
<dbReference type="Proteomes" id="UP000694723">
    <property type="component" value="Unplaced"/>
</dbReference>
<dbReference type="Proteomes" id="UP000694724">
    <property type="component" value="Unplaced"/>
</dbReference>
<dbReference type="Proteomes" id="UP000694725">
    <property type="component" value="Unplaced"/>
</dbReference>
<dbReference type="Proteomes" id="UP000694726">
    <property type="component" value="Unplaced"/>
</dbReference>
<dbReference type="Proteomes" id="UP000694727">
    <property type="component" value="Unplaced"/>
</dbReference>
<dbReference type="Proteomes" id="UP000694728">
    <property type="component" value="Unplaced"/>
</dbReference>
<dbReference type="GO" id="GO:0005615">
    <property type="term" value="C:extracellular space"/>
    <property type="evidence" value="ECO:0000318"/>
    <property type="project" value="GO_Central"/>
</dbReference>
<dbReference type="GO" id="GO:0001530">
    <property type="term" value="F:lipopolysaccharide binding"/>
    <property type="evidence" value="ECO:0000318"/>
    <property type="project" value="GO_Central"/>
</dbReference>
<dbReference type="GO" id="GO:0061844">
    <property type="term" value="P:antimicrobial humoral immune response mediated by antimicrobial peptide"/>
    <property type="evidence" value="ECO:0000318"/>
    <property type="project" value="GO_Central"/>
</dbReference>
<dbReference type="GO" id="GO:0050829">
    <property type="term" value="P:defense response to Gram-negative bacterium"/>
    <property type="evidence" value="ECO:0000318"/>
    <property type="project" value="GO_Central"/>
</dbReference>
<dbReference type="GO" id="GO:0050830">
    <property type="term" value="P:defense response to Gram-positive bacterium"/>
    <property type="evidence" value="ECO:0000318"/>
    <property type="project" value="GO_Central"/>
</dbReference>
<dbReference type="GO" id="GO:0045087">
    <property type="term" value="P:innate immune response"/>
    <property type="evidence" value="ECO:0000318"/>
    <property type="project" value="GO_Central"/>
</dbReference>
<dbReference type="FunFam" id="3.10.450.10:FF:000003">
    <property type="entry name" value="Cathelicidin antimicrobial peptide"/>
    <property type="match status" value="1"/>
</dbReference>
<dbReference type="Gene3D" id="3.10.450.10">
    <property type="match status" value="1"/>
</dbReference>
<dbReference type="InterPro" id="IPR001894">
    <property type="entry name" value="Cathelicidin-like"/>
</dbReference>
<dbReference type="InterPro" id="IPR018216">
    <property type="entry name" value="Cathelicidin_CS"/>
</dbReference>
<dbReference type="InterPro" id="IPR046350">
    <property type="entry name" value="Cystatin_sf"/>
</dbReference>
<dbReference type="PANTHER" id="PTHR10206">
    <property type="entry name" value="CATHELICIDIN"/>
    <property type="match status" value="1"/>
</dbReference>
<dbReference type="PANTHER" id="PTHR10206:SF2">
    <property type="entry name" value="CATHELICIDIN ANTIMICROBIAL PEPTIDE"/>
    <property type="match status" value="1"/>
</dbReference>
<dbReference type="Pfam" id="PF00666">
    <property type="entry name" value="Cathelicidins"/>
    <property type="match status" value="1"/>
</dbReference>
<dbReference type="SUPFAM" id="SSF54403">
    <property type="entry name" value="Cystatin/monellin"/>
    <property type="match status" value="1"/>
</dbReference>
<dbReference type="PROSITE" id="PS00946">
    <property type="entry name" value="CATHELICIDINS_1"/>
    <property type="match status" value="1"/>
</dbReference>
<dbReference type="PROSITE" id="PS00947">
    <property type="entry name" value="CATHELICIDINS_2"/>
    <property type="match status" value="1"/>
</dbReference>
<reference key="1">
    <citation type="journal article" date="1995" name="Eur. J. Biochem.">
        <title>PMAP-37, a novel antibacterial peptide from pig myeloid cells. cDNA cloning, chemical synthesis and activity.</title>
        <authorList>
            <person name="Tossi A."/>
            <person name="Scocchi M."/>
            <person name="Zanetti M."/>
            <person name="Storici P."/>
            <person name="Gennaro R."/>
        </authorList>
    </citation>
    <scope>NUCLEOTIDE SEQUENCE [MRNA]</scope>
    <scope>SYNTHESIS OF 131-167</scope>
    <source>
        <tissue>Bone marrow</tissue>
    </source>
</reference>
<gene>
    <name type="primary">PMAP37</name>
</gene>
<name>PMP37_PIG</name>